<dbReference type="EMBL" id="CP000422">
    <property type="protein sequence ID" value="ABJ68443.1"/>
    <property type="molecule type" value="Genomic_DNA"/>
</dbReference>
<dbReference type="RefSeq" id="WP_011673655.1">
    <property type="nucleotide sequence ID" value="NC_008525.1"/>
</dbReference>
<dbReference type="SMR" id="Q03EC9"/>
<dbReference type="STRING" id="278197.PEPE_1405"/>
<dbReference type="GeneID" id="33063040"/>
<dbReference type="KEGG" id="ppe:PEPE_1405"/>
<dbReference type="eggNOG" id="COG0199">
    <property type="taxonomic scope" value="Bacteria"/>
</dbReference>
<dbReference type="HOGENOM" id="CLU_139869_3_0_9"/>
<dbReference type="OrthoDB" id="9810484at2"/>
<dbReference type="Proteomes" id="UP000000773">
    <property type="component" value="Chromosome"/>
</dbReference>
<dbReference type="GO" id="GO:0015935">
    <property type="term" value="C:small ribosomal subunit"/>
    <property type="evidence" value="ECO:0007669"/>
    <property type="project" value="TreeGrafter"/>
</dbReference>
<dbReference type="GO" id="GO:0019843">
    <property type="term" value="F:rRNA binding"/>
    <property type="evidence" value="ECO:0007669"/>
    <property type="project" value="UniProtKB-UniRule"/>
</dbReference>
<dbReference type="GO" id="GO:0003735">
    <property type="term" value="F:structural constituent of ribosome"/>
    <property type="evidence" value="ECO:0007669"/>
    <property type="project" value="InterPro"/>
</dbReference>
<dbReference type="GO" id="GO:0008270">
    <property type="term" value="F:zinc ion binding"/>
    <property type="evidence" value="ECO:0007669"/>
    <property type="project" value="UniProtKB-UniRule"/>
</dbReference>
<dbReference type="GO" id="GO:0006412">
    <property type="term" value="P:translation"/>
    <property type="evidence" value="ECO:0007669"/>
    <property type="project" value="UniProtKB-UniRule"/>
</dbReference>
<dbReference type="FunFam" id="4.10.830.10:FF:000001">
    <property type="entry name" value="30S ribosomal protein S14 type Z"/>
    <property type="match status" value="1"/>
</dbReference>
<dbReference type="Gene3D" id="4.10.830.10">
    <property type="entry name" value="30s Ribosomal Protein S14, Chain N"/>
    <property type="match status" value="1"/>
</dbReference>
<dbReference type="HAMAP" id="MF_01364_B">
    <property type="entry name" value="Ribosomal_uS14_2_B"/>
    <property type="match status" value="1"/>
</dbReference>
<dbReference type="InterPro" id="IPR001209">
    <property type="entry name" value="Ribosomal_uS14"/>
</dbReference>
<dbReference type="InterPro" id="IPR023053">
    <property type="entry name" value="Ribosomal_uS14_bact"/>
</dbReference>
<dbReference type="InterPro" id="IPR018271">
    <property type="entry name" value="Ribosomal_uS14_CS"/>
</dbReference>
<dbReference type="InterPro" id="IPR043140">
    <property type="entry name" value="Ribosomal_uS14_sf"/>
</dbReference>
<dbReference type="NCBIfam" id="NF005974">
    <property type="entry name" value="PRK08061.1"/>
    <property type="match status" value="1"/>
</dbReference>
<dbReference type="PANTHER" id="PTHR19836">
    <property type="entry name" value="30S RIBOSOMAL PROTEIN S14"/>
    <property type="match status" value="1"/>
</dbReference>
<dbReference type="PANTHER" id="PTHR19836:SF26">
    <property type="entry name" value="SMALL RIBOSOMAL SUBUNIT PROTEIN US14B"/>
    <property type="match status" value="1"/>
</dbReference>
<dbReference type="Pfam" id="PF00253">
    <property type="entry name" value="Ribosomal_S14"/>
    <property type="match status" value="1"/>
</dbReference>
<dbReference type="SUPFAM" id="SSF57716">
    <property type="entry name" value="Glucocorticoid receptor-like (DNA-binding domain)"/>
    <property type="match status" value="1"/>
</dbReference>
<dbReference type="PROSITE" id="PS00527">
    <property type="entry name" value="RIBOSOMAL_S14"/>
    <property type="match status" value="1"/>
</dbReference>
<protein>
    <recommendedName>
        <fullName evidence="1">Small ribosomal subunit protein uS14B</fullName>
    </recommendedName>
    <alternativeName>
        <fullName evidence="2">30S ribosomal protein S14 type Z</fullName>
    </alternativeName>
</protein>
<reference key="1">
    <citation type="journal article" date="2006" name="Proc. Natl. Acad. Sci. U.S.A.">
        <title>Comparative genomics of the lactic acid bacteria.</title>
        <authorList>
            <person name="Makarova K.S."/>
            <person name="Slesarev A."/>
            <person name="Wolf Y.I."/>
            <person name="Sorokin A."/>
            <person name="Mirkin B."/>
            <person name="Koonin E.V."/>
            <person name="Pavlov A."/>
            <person name="Pavlova N."/>
            <person name="Karamychev V."/>
            <person name="Polouchine N."/>
            <person name="Shakhova V."/>
            <person name="Grigoriev I."/>
            <person name="Lou Y."/>
            <person name="Rohksar D."/>
            <person name="Lucas S."/>
            <person name="Huang K."/>
            <person name="Goodstein D.M."/>
            <person name="Hawkins T."/>
            <person name="Plengvidhya V."/>
            <person name="Welker D."/>
            <person name="Hughes J."/>
            <person name="Goh Y."/>
            <person name="Benson A."/>
            <person name="Baldwin K."/>
            <person name="Lee J.-H."/>
            <person name="Diaz-Muniz I."/>
            <person name="Dosti B."/>
            <person name="Smeianov V."/>
            <person name="Wechter W."/>
            <person name="Barabote R."/>
            <person name="Lorca G."/>
            <person name="Altermann E."/>
            <person name="Barrangou R."/>
            <person name="Ganesan B."/>
            <person name="Xie Y."/>
            <person name="Rawsthorne H."/>
            <person name="Tamir D."/>
            <person name="Parker C."/>
            <person name="Breidt F."/>
            <person name="Broadbent J.R."/>
            <person name="Hutkins R."/>
            <person name="O'Sullivan D."/>
            <person name="Steele J."/>
            <person name="Unlu G."/>
            <person name="Saier M.H. Jr."/>
            <person name="Klaenhammer T."/>
            <person name="Richardson P."/>
            <person name="Kozyavkin S."/>
            <person name="Weimer B.C."/>
            <person name="Mills D.A."/>
        </authorList>
    </citation>
    <scope>NUCLEOTIDE SEQUENCE [LARGE SCALE GENOMIC DNA]</scope>
    <source>
        <strain>ATCC 25745 / CCUG 21536 / LMG 10740 / 183-1w</strain>
    </source>
</reference>
<feature type="chain" id="PRO_1000067961" description="Small ribosomal subunit protein uS14B">
    <location>
        <begin position="1"/>
        <end position="61"/>
    </location>
</feature>
<feature type="binding site" evidence="1">
    <location>
        <position position="24"/>
    </location>
    <ligand>
        <name>Zn(2+)</name>
        <dbReference type="ChEBI" id="CHEBI:29105"/>
    </ligand>
</feature>
<feature type="binding site" evidence="1">
    <location>
        <position position="27"/>
    </location>
    <ligand>
        <name>Zn(2+)</name>
        <dbReference type="ChEBI" id="CHEBI:29105"/>
    </ligand>
</feature>
<feature type="binding site" evidence="1">
    <location>
        <position position="40"/>
    </location>
    <ligand>
        <name>Zn(2+)</name>
        <dbReference type="ChEBI" id="CHEBI:29105"/>
    </ligand>
</feature>
<feature type="binding site" evidence="1">
    <location>
        <position position="43"/>
    </location>
    <ligand>
        <name>Zn(2+)</name>
        <dbReference type="ChEBI" id="CHEBI:29105"/>
    </ligand>
</feature>
<evidence type="ECO:0000255" key="1">
    <source>
        <dbReference type="HAMAP-Rule" id="MF_01364"/>
    </source>
</evidence>
<evidence type="ECO:0000305" key="2"/>
<keyword id="KW-0479">Metal-binding</keyword>
<keyword id="KW-0687">Ribonucleoprotein</keyword>
<keyword id="KW-0689">Ribosomal protein</keyword>
<keyword id="KW-0694">RNA-binding</keyword>
<keyword id="KW-0699">rRNA-binding</keyword>
<keyword id="KW-0862">Zinc</keyword>
<proteinExistence type="inferred from homology"/>
<gene>
    <name evidence="1" type="primary">rpsZ</name>
    <name evidence="1" type="synonym">rpsN</name>
    <name type="ordered locus">PEPE_1405</name>
</gene>
<sequence>MAKKSLVVKSERPAKFSTQTYTRCERCGRPHSVYRKFHLCRICLRELAHEGQIPGMKKASW</sequence>
<accession>Q03EC9</accession>
<comment type="function">
    <text evidence="1">Binds 16S rRNA, required for the assembly of 30S particles and may also be responsible for determining the conformation of the 16S rRNA at the A site.</text>
</comment>
<comment type="cofactor">
    <cofactor evidence="1">
        <name>Zn(2+)</name>
        <dbReference type="ChEBI" id="CHEBI:29105"/>
    </cofactor>
    <text evidence="1">Binds 1 zinc ion per subunit.</text>
</comment>
<comment type="subunit">
    <text evidence="1">Part of the 30S ribosomal subunit. Contacts proteins S3 and S10.</text>
</comment>
<comment type="similarity">
    <text evidence="1">Belongs to the universal ribosomal protein uS14 family. Zinc-binding uS14 subfamily.</text>
</comment>
<organism>
    <name type="scientific">Pediococcus pentosaceus (strain ATCC 25745 / CCUG 21536 / LMG 10740 / 183-1w)</name>
    <dbReference type="NCBI Taxonomy" id="278197"/>
    <lineage>
        <taxon>Bacteria</taxon>
        <taxon>Bacillati</taxon>
        <taxon>Bacillota</taxon>
        <taxon>Bacilli</taxon>
        <taxon>Lactobacillales</taxon>
        <taxon>Lactobacillaceae</taxon>
        <taxon>Pediococcus</taxon>
    </lineage>
</organism>
<name>RS14Z_PEDPA</name>